<comment type="function">
    <text evidence="1">Fluoride-specific ion channel. Important for reducing fluoride concentration in the cell, thus reducing its toxicity.</text>
</comment>
<comment type="catalytic activity">
    <reaction evidence="1">
        <text>fluoride(in) = fluoride(out)</text>
        <dbReference type="Rhea" id="RHEA:76159"/>
        <dbReference type="ChEBI" id="CHEBI:17051"/>
    </reaction>
    <physiologicalReaction direction="left-to-right" evidence="1">
        <dbReference type="Rhea" id="RHEA:76160"/>
    </physiologicalReaction>
</comment>
<comment type="activity regulation">
    <text evidence="1">Na(+) is not transported, but it plays an essential structural role and its presence is essential for fluoride channel function.</text>
</comment>
<comment type="subcellular location">
    <subcellularLocation>
        <location evidence="1">Cell membrane</location>
        <topology evidence="1">Multi-pass membrane protein</topology>
    </subcellularLocation>
</comment>
<comment type="similarity">
    <text evidence="1">Belongs to the fluoride channel Fluc/FEX (TC 1.A.43) family.</text>
</comment>
<name>FLUC2_BIFLO</name>
<protein>
    <recommendedName>
        <fullName evidence="1">Fluoride-specific ion channel FluC 2</fullName>
    </recommendedName>
</protein>
<sequence>MDSQSPSAGARPITHTTTPPARKLPDIHLDIVLVVFCGGAIGTAIRYAFAQIPAAGSFHTGTFVANMLACFCYAGLTAYLAGASRFGARSKELASRGLGMGVCGGLSTMSTLALEGFTAIRDGQVAAGIAYLLVTFALGLVCASAGVWAGTHLAGSSNVSAEASADTNAATTSKGGKA</sequence>
<keyword id="KW-1003">Cell membrane</keyword>
<keyword id="KW-0407">Ion channel</keyword>
<keyword id="KW-0406">Ion transport</keyword>
<keyword id="KW-0472">Membrane</keyword>
<keyword id="KW-0479">Metal-binding</keyword>
<keyword id="KW-1185">Reference proteome</keyword>
<keyword id="KW-0915">Sodium</keyword>
<keyword id="KW-0812">Transmembrane</keyword>
<keyword id="KW-1133">Transmembrane helix</keyword>
<keyword id="KW-0813">Transport</keyword>
<evidence type="ECO:0000255" key="1">
    <source>
        <dbReference type="HAMAP-Rule" id="MF_00454"/>
    </source>
</evidence>
<organism>
    <name type="scientific">Bifidobacterium longum (strain NCC 2705)</name>
    <dbReference type="NCBI Taxonomy" id="206672"/>
    <lineage>
        <taxon>Bacteria</taxon>
        <taxon>Bacillati</taxon>
        <taxon>Actinomycetota</taxon>
        <taxon>Actinomycetes</taxon>
        <taxon>Bifidobacteriales</taxon>
        <taxon>Bifidobacteriaceae</taxon>
        <taxon>Bifidobacterium</taxon>
    </lineage>
</organism>
<accession>Q8G5C3</accession>
<gene>
    <name evidence="1" type="primary">fluC2</name>
    <name evidence="1" type="synonym">crcB2</name>
    <name type="ordered locus">BL1091</name>
</gene>
<proteinExistence type="inferred from homology"/>
<dbReference type="EMBL" id="AE014295">
    <property type="protein sequence ID" value="AAN24899.1"/>
    <property type="molecule type" value="Genomic_DNA"/>
</dbReference>
<dbReference type="RefSeq" id="NP_696263.1">
    <property type="nucleotide sequence ID" value="NC_004307.2"/>
</dbReference>
<dbReference type="RefSeq" id="WP_007051196.1">
    <property type="nucleotide sequence ID" value="NC_004307.2"/>
</dbReference>
<dbReference type="SMR" id="Q8G5C3"/>
<dbReference type="STRING" id="206672.BL1091"/>
<dbReference type="EnsemblBacteria" id="AAN24899">
    <property type="protein sequence ID" value="AAN24899"/>
    <property type="gene ID" value="BL1091"/>
</dbReference>
<dbReference type="KEGG" id="blo:BL1091"/>
<dbReference type="PATRIC" id="fig|206672.9.peg.798"/>
<dbReference type="HOGENOM" id="CLU_114342_4_0_11"/>
<dbReference type="OrthoDB" id="3240363at2"/>
<dbReference type="PhylomeDB" id="Q8G5C3"/>
<dbReference type="Proteomes" id="UP000000439">
    <property type="component" value="Chromosome"/>
</dbReference>
<dbReference type="GO" id="GO:0005886">
    <property type="term" value="C:plasma membrane"/>
    <property type="evidence" value="ECO:0007669"/>
    <property type="project" value="UniProtKB-SubCell"/>
</dbReference>
<dbReference type="GO" id="GO:0062054">
    <property type="term" value="F:fluoride channel activity"/>
    <property type="evidence" value="ECO:0007669"/>
    <property type="project" value="UniProtKB-UniRule"/>
</dbReference>
<dbReference type="GO" id="GO:0046872">
    <property type="term" value="F:metal ion binding"/>
    <property type="evidence" value="ECO:0007669"/>
    <property type="project" value="UniProtKB-KW"/>
</dbReference>
<dbReference type="GO" id="GO:0140114">
    <property type="term" value="P:cellular detoxification of fluoride"/>
    <property type="evidence" value="ECO:0007669"/>
    <property type="project" value="UniProtKB-UniRule"/>
</dbReference>
<dbReference type="HAMAP" id="MF_00454">
    <property type="entry name" value="FluC"/>
    <property type="match status" value="1"/>
</dbReference>
<dbReference type="InterPro" id="IPR003691">
    <property type="entry name" value="FluC"/>
</dbReference>
<dbReference type="PANTHER" id="PTHR28259">
    <property type="entry name" value="FLUORIDE EXPORT PROTEIN 1-RELATED"/>
    <property type="match status" value="1"/>
</dbReference>
<dbReference type="PANTHER" id="PTHR28259:SF1">
    <property type="entry name" value="FLUORIDE EXPORT PROTEIN 1-RELATED"/>
    <property type="match status" value="1"/>
</dbReference>
<dbReference type="Pfam" id="PF02537">
    <property type="entry name" value="CRCB"/>
    <property type="match status" value="1"/>
</dbReference>
<feature type="chain" id="PRO_0000110060" description="Fluoride-specific ion channel FluC 2">
    <location>
        <begin position="1"/>
        <end position="178"/>
    </location>
</feature>
<feature type="transmembrane region" description="Helical" evidence="1">
    <location>
        <begin position="25"/>
        <end position="45"/>
    </location>
</feature>
<feature type="transmembrane region" description="Helical" evidence="1">
    <location>
        <begin position="63"/>
        <end position="83"/>
    </location>
</feature>
<feature type="transmembrane region" description="Helical" evidence="1">
    <location>
        <begin position="97"/>
        <end position="117"/>
    </location>
</feature>
<feature type="transmembrane region" description="Helical" evidence="1">
    <location>
        <begin position="129"/>
        <end position="149"/>
    </location>
</feature>
<feature type="binding site" evidence="1">
    <location>
        <position position="104"/>
    </location>
    <ligand>
        <name>Na(+)</name>
        <dbReference type="ChEBI" id="CHEBI:29101"/>
        <note>structural</note>
    </ligand>
</feature>
<feature type="binding site" evidence="1">
    <location>
        <position position="107"/>
    </location>
    <ligand>
        <name>Na(+)</name>
        <dbReference type="ChEBI" id="CHEBI:29101"/>
        <note>structural</note>
    </ligand>
</feature>
<reference key="1">
    <citation type="journal article" date="2002" name="Proc. Natl. Acad. Sci. U.S.A.">
        <title>The genome sequence of Bifidobacterium longum reflects its adaptation to the human gastrointestinal tract.</title>
        <authorList>
            <person name="Schell M.A."/>
            <person name="Karmirantzou M."/>
            <person name="Snel B."/>
            <person name="Vilanova D."/>
            <person name="Berger B."/>
            <person name="Pessi G."/>
            <person name="Zwahlen M.-C."/>
            <person name="Desiere F."/>
            <person name="Bork P."/>
            <person name="Delley M."/>
            <person name="Pridmore R.D."/>
            <person name="Arigoni F."/>
        </authorList>
    </citation>
    <scope>NUCLEOTIDE SEQUENCE [LARGE SCALE GENOMIC DNA]</scope>
    <source>
        <strain>NCC 2705</strain>
    </source>
</reference>